<dbReference type="EC" id="4.2.1.17" evidence="1"/>
<dbReference type="EC" id="5.1.2.3" evidence="1"/>
<dbReference type="EC" id="5.3.3.8" evidence="1"/>
<dbReference type="EC" id="1.1.1.35" evidence="1"/>
<dbReference type="EMBL" id="CU928160">
    <property type="protein sequence ID" value="CAR00820.1"/>
    <property type="molecule type" value="Genomic_DNA"/>
</dbReference>
<dbReference type="RefSeq" id="WP_000965943.1">
    <property type="nucleotide sequence ID" value="NC_011741.1"/>
</dbReference>
<dbReference type="SMR" id="B7M649"/>
<dbReference type="KEGG" id="ecr:ECIAI1_4039"/>
<dbReference type="HOGENOM" id="CLU_009834_16_3_6"/>
<dbReference type="UniPathway" id="UPA00659"/>
<dbReference type="GO" id="GO:0036125">
    <property type="term" value="C:fatty acid beta-oxidation multienzyme complex"/>
    <property type="evidence" value="ECO:0007669"/>
    <property type="project" value="InterPro"/>
</dbReference>
<dbReference type="GO" id="GO:0008692">
    <property type="term" value="F:3-hydroxybutyryl-CoA epimerase activity"/>
    <property type="evidence" value="ECO:0007669"/>
    <property type="project" value="UniProtKB-UniRule"/>
</dbReference>
<dbReference type="GO" id="GO:0004165">
    <property type="term" value="F:delta(3)-delta(2)-enoyl-CoA isomerase activity"/>
    <property type="evidence" value="ECO:0007669"/>
    <property type="project" value="UniProtKB-UniRule"/>
</dbReference>
<dbReference type="GO" id="GO:0004300">
    <property type="term" value="F:enoyl-CoA hydratase activity"/>
    <property type="evidence" value="ECO:0007669"/>
    <property type="project" value="UniProtKB-UniRule"/>
</dbReference>
<dbReference type="GO" id="GO:0016509">
    <property type="term" value="F:long-chain-3-hydroxyacyl-CoA dehydrogenase activity"/>
    <property type="evidence" value="ECO:0007669"/>
    <property type="project" value="TreeGrafter"/>
</dbReference>
<dbReference type="GO" id="GO:0070403">
    <property type="term" value="F:NAD+ binding"/>
    <property type="evidence" value="ECO:0007669"/>
    <property type="project" value="InterPro"/>
</dbReference>
<dbReference type="GO" id="GO:0006635">
    <property type="term" value="P:fatty acid beta-oxidation"/>
    <property type="evidence" value="ECO:0007669"/>
    <property type="project" value="UniProtKB-UniRule"/>
</dbReference>
<dbReference type="CDD" id="cd06558">
    <property type="entry name" value="crotonase-like"/>
    <property type="match status" value="1"/>
</dbReference>
<dbReference type="FunFam" id="1.10.1040.50:FF:000001">
    <property type="entry name" value="Fatty acid oxidation complex subunit alpha"/>
    <property type="match status" value="1"/>
</dbReference>
<dbReference type="FunFam" id="3.90.226.10:FF:000018">
    <property type="entry name" value="Fatty acid oxidation complex subunit alpha"/>
    <property type="match status" value="1"/>
</dbReference>
<dbReference type="FunFam" id="3.40.50.720:FF:000009">
    <property type="entry name" value="Fatty oxidation complex, alpha subunit"/>
    <property type="match status" value="1"/>
</dbReference>
<dbReference type="Gene3D" id="1.10.1040.50">
    <property type="match status" value="1"/>
</dbReference>
<dbReference type="Gene3D" id="3.90.226.10">
    <property type="entry name" value="2-enoyl-CoA Hydratase, Chain A, domain 1"/>
    <property type="match status" value="1"/>
</dbReference>
<dbReference type="Gene3D" id="3.40.50.720">
    <property type="entry name" value="NAD(P)-binding Rossmann-like Domain"/>
    <property type="match status" value="1"/>
</dbReference>
<dbReference type="HAMAP" id="MF_01621">
    <property type="entry name" value="FadB"/>
    <property type="match status" value="1"/>
</dbReference>
<dbReference type="InterPro" id="IPR006180">
    <property type="entry name" value="3-OHacyl-CoA_DH_CS"/>
</dbReference>
<dbReference type="InterPro" id="IPR006176">
    <property type="entry name" value="3-OHacyl-CoA_DH_NAD-bd"/>
</dbReference>
<dbReference type="InterPro" id="IPR006108">
    <property type="entry name" value="3HC_DH_C"/>
</dbReference>
<dbReference type="InterPro" id="IPR008927">
    <property type="entry name" value="6-PGluconate_DH-like_C_sf"/>
</dbReference>
<dbReference type="InterPro" id="IPR029045">
    <property type="entry name" value="ClpP/crotonase-like_dom_sf"/>
</dbReference>
<dbReference type="InterPro" id="IPR018376">
    <property type="entry name" value="Enoyl-CoA_hyd/isom_CS"/>
</dbReference>
<dbReference type="InterPro" id="IPR001753">
    <property type="entry name" value="Enoyl-CoA_hydra/iso"/>
</dbReference>
<dbReference type="InterPro" id="IPR050136">
    <property type="entry name" value="FA_oxidation_alpha_subunit"/>
</dbReference>
<dbReference type="InterPro" id="IPR012799">
    <property type="entry name" value="FadB"/>
</dbReference>
<dbReference type="InterPro" id="IPR036291">
    <property type="entry name" value="NAD(P)-bd_dom_sf"/>
</dbReference>
<dbReference type="NCBIfam" id="TIGR02437">
    <property type="entry name" value="FadB"/>
    <property type="match status" value="1"/>
</dbReference>
<dbReference type="NCBIfam" id="NF008727">
    <property type="entry name" value="PRK11730.1"/>
    <property type="match status" value="1"/>
</dbReference>
<dbReference type="PANTHER" id="PTHR43612">
    <property type="entry name" value="TRIFUNCTIONAL ENZYME SUBUNIT ALPHA"/>
    <property type="match status" value="1"/>
</dbReference>
<dbReference type="PANTHER" id="PTHR43612:SF3">
    <property type="entry name" value="TRIFUNCTIONAL ENZYME SUBUNIT ALPHA, MITOCHONDRIAL"/>
    <property type="match status" value="1"/>
</dbReference>
<dbReference type="Pfam" id="PF00725">
    <property type="entry name" value="3HCDH"/>
    <property type="match status" value="2"/>
</dbReference>
<dbReference type="Pfam" id="PF02737">
    <property type="entry name" value="3HCDH_N"/>
    <property type="match status" value="1"/>
</dbReference>
<dbReference type="Pfam" id="PF00378">
    <property type="entry name" value="ECH_1"/>
    <property type="match status" value="1"/>
</dbReference>
<dbReference type="SUPFAM" id="SSF48179">
    <property type="entry name" value="6-phosphogluconate dehydrogenase C-terminal domain-like"/>
    <property type="match status" value="2"/>
</dbReference>
<dbReference type="SUPFAM" id="SSF52096">
    <property type="entry name" value="ClpP/crotonase"/>
    <property type="match status" value="1"/>
</dbReference>
<dbReference type="SUPFAM" id="SSF51735">
    <property type="entry name" value="NAD(P)-binding Rossmann-fold domains"/>
    <property type="match status" value="1"/>
</dbReference>
<dbReference type="PROSITE" id="PS00067">
    <property type="entry name" value="3HCDH"/>
    <property type="match status" value="1"/>
</dbReference>
<dbReference type="PROSITE" id="PS00166">
    <property type="entry name" value="ENOYL_COA_HYDRATASE"/>
    <property type="match status" value="1"/>
</dbReference>
<accession>B7M649</accession>
<feature type="chain" id="PRO_1000186038" description="Fatty acid oxidation complex subunit alpha">
    <location>
        <begin position="1"/>
        <end position="729"/>
    </location>
</feature>
<feature type="region of interest" description="Enoyl-CoA hydratase/isomerase" evidence="1">
    <location>
        <begin position="1"/>
        <end position="189"/>
    </location>
</feature>
<feature type="region of interest" description="3-hydroxyacyl-CoA dehydrogenase" evidence="1">
    <location>
        <begin position="311"/>
        <end position="729"/>
    </location>
</feature>
<feature type="region of interest" description="Disordered" evidence="2">
    <location>
        <begin position="708"/>
        <end position="729"/>
    </location>
</feature>
<feature type="active site" description="For 3-hydroxyacyl-CoA dehydrogenase activity" evidence="1">
    <location>
        <position position="450"/>
    </location>
</feature>
<feature type="binding site" evidence="1">
    <location>
        <position position="296"/>
    </location>
    <ligand>
        <name>substrate</name>
    </ligand>
</feature>
<feature type="binding site" evidence="1">
    <location>
        <position position="324"/>
    </location>
    <ligand>
        <name>NAD(+)</name>
        <dbReference type="ChEBI" id="CHEBI:57540"/>
    </ligand>
</feature>
<feature type="binding site" evidence="1">
    <location>
        <position position="343"/>
    </location>
    <ligand>
        <name>NAD(+)</name>
        <dbReference type="ChEBI" id="CHEBI:57540"/>
    </ligand>
</feature>
<feature type="binding site" evidence="1">
    <location>
        <begin position="400"/>
        <end position="402"/>
    </location>
    <ligand>
        <name>NAD(+)</name>
        <dbReference type="ChEBI" id="CHEBI:57540"/>
    </ligand>
</feature>
<feature type="binding site" evidence="1">
    <location>
        <position position="407"/>
    </location>
    <ligand>
        <name>NAD(+)</name>
        <dbReference type="ChEBI" id="CHEBI:57540"/>
    </ligand>
</feature>
<feature type="binding site" evidence="1">
    <location>
        <position position="429"/>
    </location>
    <ligand>
        <name>NAD(+)</name>
        <dbReference type="ChEBI" id="CHEBI:57540"/>
    </ligand>
</feature>
<feature type="binding site" evidence="1">
    <location>
        <position position="453"/>
    </location>
    <ligand>
        <name>NAD(+)</name>
        <dbReference type="ChEBI" id="CHEBI:57540"/>
    </ligand>
</feature>
<feature type="binding site" evidence="1">
    <location>
        <position position="500"/>
    </location>
    <ligand>
        <name>substrate</name>
    </ligand>
</feature>
<feature type="binding site" evidence="1">
    <location>
        <position position="660"/>
    </location>
    <ligand>
        <name>substrate</name>
    </ligand>
</feature>
<feature type="site" description="Important for catalytic activity" evidence="1">
    <location>
        <position position="119"/>
    </location>
</feature>
<feature type="site" description="Important for catalytic activity" evidence="1">
    <location>
        <position position="139"/>
    </location>
</feature>
<reference key="1">
    <citation type="journal article" date="2009" name="PLoS Genet.">
        <title>Organised genome dynamics in the Escherichia coli species results in highly diverse adaptive paths.</title>
        <authorList>
            <person name="Touchon M."/>
            <person name="Hoede C."/>
            <person name="Tenaillon O."/>
            <person name="Barbe V."/>
            <person name="Baeriswyl S."/>
            <person name="Bidet P."/>
            <person name="Bingen E."/>
            <person name="Bonacorsi S."/>
            <person name="Bouchier C."/>
            <person name="Bouvet O."/>
            <person name="Calteau A."/>
            <person name="Chiapello H."/>
            <person name="Clermont O."/>
            <person name="Cruveiller S."/>
            <person name="Danchin A."/>
            <person name="Diard M."/>
            <person name="Dossat C."/>
            <person name="Karoui M.E."/>
            <person name="Frapy E."/>
            <person name="Garry L."/>
            <person name="Ghigo J.M."/>
            <person name="Gilles A.M."/>
            <person name="Johnson J."/>
            <person name="Le Bouguenec C."/>
            <person name="Lescat M."/>
            <person name="Mangenot S."/>
            <person name="Martinez-Jehanne V."/>
            <person name="Matic I."/>
            <person name="Nassif X."/>
            <person name="Oztas S."/>
            <person name="Petit M.A."/>
            <person name="Pichon C."/>
            <person name="Rouy Z."/>
            <person name="Ruf C.S."/>
            <person name="Schneider D."/>
            <person name="Tourret J."/>
            <person name="Vacherie B."/>
            <person name="Vallenet D."/>
            <person name="Medigue C."/>
            <person name="Rocha E.P.C."/>
            <person name="Denamur E."/>
        </authorList>
    </citation>
    <scope>NUCLEOTIDE SEQUENCE [LARGE SCALE GENOMIC DNA]</scope>
    <source>
        <strain>IAI1</strain>
    </source>
</reference>
<evidence type="ECO:0000255" key="1">
    <source>
        <dbReference type="HAMAP-Rule" id="MF_01621"/>
    </source>
</evidence>
<evidence type="ECO:0000256" key="2">
    <source>
        <dbReference type="SAM" id="MobiDB-lite"/>
    </source>
</evidence>
<keyword id="KW-0276">Fatty acid metabolism</keyword>
<keyword id="KW-0413">Isomerase</keyword>
<keyword id="KW-0442">Lipid degradation</keyword>
<keyword id="KW-0443">Lipid metabolism</keyword>
<keyword id="KW-0456">Lyase</keyword>
<keyword id="KW-0511">Multifunctional enzyme</keyword>
<keyword id="KW-0520">NAD</keyword>
<keyword id="KW-0560">Oxidoreductase</keyword>
<gene>
    <name evidence="1" type="primary">fadB</name>
    <name type="ordered locus">ECIAI1_4039</name>
</gene>
<comment type="function">
    <text evidence="1">Involved in the aerobic and anaerobic degradation of long-chain fatty acids via beta-oxidation cycle. Catalyzes the formation of 3-oxoacyl-CoA from enoyl-CoA via L-3-hydroxyacyl-CoA. It can also use D-3-hydroxyacyl-CoA and cis-3-enoyl-CoA as substrate.</text>
</comment>
<comment type="catalytic activity">
    <reaction evidence="1">
        <text>a (3S)-3-hydroxyacyl-CoA + NAD(+) = a 3-oxoacyl-CoA + NADH + H(+)</text>
        <dbReference type="Rhea" id="RHEA:22432"/>
        <dbReference type="ChEBI" id="CHEBI:15378"/>
        <dbReference type="ChEBI" id="CHEBI:57318"/>
        <dbReference type="ChEBI" id="CHEBI:57540"/>
        <dbReference type="ChEBI" id="CHEBI:57945"/>
        <dbReference type="ChEBI" id="CHEBI:90726"/>
        <dbReference type="EC" id="1.1.1.35"/>
    </reaction>
</comment>
<comment type="catalytic activity">
    <reaction evidence="1">
        <text>a (3S)-3-hydroxyacyl-CoA = a (2E)-enoyl-CoA + H2O</text>
        <dbReference type="Rhea" id="RHEA:16105"/>
        <dbReference type="ChEBI" id="CHEBI:15377"/>
        <dbReference type="ChEBI" id="CHEBI:57318"/>
        <dbReference type="ChEBI" id="CHEBI:58856"/>
        <dbReference type="EC" id="4.2.1.17"/>
    </reaction>
</comment>
<comment type="catalytic activity">
    <reaction evidence="1">
        <text>a 4-saturated-(3S)-3-hydroxyacyl-CoA = a (3E)-enoyl-CoA + H2O</text>
        <dbReference type="Rhea" id="RHEA:20724"/>
        <dbReference type="ChEBI" id="CHEBI:15377"/>
        <dbReference type="ChEBI" id="CHEBI:58521"/>
        <dbReference type="ChEBI" id="CHEBI:137480"/>
        <dbReference type="EC" id="4.2.1.17"/>
    </reaction>
</comment>
<comment type="catalytic activity">
    <reaction evidence="1">
        <text>(3S)-3-hydroxybutanoyl-CoA = (3R)-3-hydroxybutanoyl-CoA</text>
        <dbReference type="Rhea" id="RHEA:21760"/>
        <dbReference type="ChEBI" id="CHEBI:57315"/>
        <dbReference type="ChEBI" id="CHEBI:57316"/>
        <dbReference type="EC" id="5.1.2.3"/>
    </reaction>
</comment>
<comment type="catalytic activity">
    <reaction evidence="1">
        <text>a (3Z)-enoyl-CoA = a 4-saturated (2E)-enoyl-CoA</text>
        <dbReference type="Rhea" id="RHEA:45900"/>
        <dbReference type="ChEBI" id="CHEBI:85097"/>
        <dbReference type="ChEBI" id="CHEBI:85489"/>
        <dbReference type="EC" id="5.3.3.8"/>
    </reaction>
</comment>
<comment type="catalytic activity">
    <reaction evidence="1">
        <text>a (3E)-enoyl-CoA = a 4-saturated (2E)-enoyl-CoA</text>
        <dbReference type="Rhea" id="RHEA:45228"/>
        <dbReference type="ChEBI" id="CHEBI:58521"/>
        <dbReference type="ChEBI" id="CHEBI:85097"/>
        <dbReference type="EC" id="5.3.3.8"/>
    </reaction>
</comment>
<comment type="pathway">
    <text evidence="1">Lipid metabolism; fatty acid beta-oxidation.</text>
</comment>
<comment type="subunit">
    <text evidence="1">Heterotetramer of two alpha chains (FadB) and two beta chains (FadA).</text>
</comment>
<comment type="similarity">
    <text evidence="1">In the N-terminal section; belongs to the enoyl-CoA hydratase/isomerase family.</text>
</comment>
<comment type="similarity">
    <text evidence="1">In the C-terminal section; belongs to the 3-hydroxyacyl-CoA dehydrogenase family.</text>
</comment>
<name>FADB_ECO8A</name>
<sequence length="729" mass="79549">MLYKGDTLYLDWLEDGIAELVFDAPGSVNKLDTATVASLGEAIGVLEQQSDLKGLLLRSNKAAFIVGADITEFLSLFLVPEEQLSQWLHFANSVFNRLEDLPVPTIAAVNGYALGGGCECVLATDYRLATPDLRIGLPETKLGIMPGFGGSVRMPRMLGADSALEIIAAGKDVGADQALKIGLVDGVVKAEKLVEGAKAVLRQAINGDLDWKAKRQPKLEPLKLSKIEATMSFTIAKGMVAQTAGKHYPAPITAVKTIEAAARFGREEALNLENKSFVPLAHTNEARALVGIFLNDQYVKGKAKKLTKDVETPKQAAVLGAGIMGGGIAYQSAWKGVPVVMKDINDKSLTLGMTEAAKLLNKQLERGKIDGLKLAGVISTIHPTLDYAGFDRVDVVVEAVVENPKVKKAVLAETEQKVRPDTVLASNTSTIPISELANALERPENFCGMHFFNPVHRMPLVEIIRGEKSSDETIAKVVAWASKMGKTPIVVNDCPGFFVNRVLFPYFAGFSQLLRDGADFRKIDKVMEKQFGWPMGPAYLLDVVGIDTAHHAQAVMAAGFPQRMQKDYRDAIDALFDANRFGQKNGLGFWRYKEDSKGKPKKEEDAAVEDLLAEVSQPKRDFSEEEIIARMMIPMVNEVVRCLEEGIIATPAEADMALVYGLGFPPFHGGAFRWLDTLGSAKYLDMAQQYQHLGPLYEVPEGLRNKARHNEPYYPPVEPARPVGDLKTA</sequence>
<organism>
    <name type="scientific">Escherichia coli O8 (strain IAI1)</name>
    <dbReference type="NCBI Taxonomy" id="585034"/>
    <lineage>
        <taxon>Bacteria</taxon>
        <taxon>Pseudomonadati</taxon>
        <taxon>Pseudomonadota</taxon>
        <taxon>Gammaproteobacteria</taxon>
        <taxon>Enterobacterales</taxon>
        <taxon>Enterobacteriaceae</taxon>
        <taxon>Escherichia</taxon>
    </lineage>
</organism>
<proteinExistence type="inferred from homology"/>
<protein>
    <recommendedName>
        <fullName evidence="1">Fatty acid oxidation complex subunit alpha</fullName>
    </recommendedName>
    <domain>
        <recommendedName>
            <fullName evidence="1">Enoyl-CoA hydratase/Delta(3)-cis-Delta(2)-trans-enoyl-CoA isomerase/3-hydroxybutyryl-CoA epimerase</fullName>
            <ecNumber evidence="1">4.2.1.17</ecNumber>
            <ecNumber evidence="1">5.1.2.3</ecNumber>
            <ecNumber evidence="1">5.3.3.8</ecNumber>
        </recommendedName>
    </domain>
    <domain>
        <recommendedName>
            <fullName evidence="1">3-hydroxyacyl-CoA dehydrogenase</fullName>
            <ecNumber evidence="1">1.1.1.35</ecNumber>
        </recommendedName>
    </domain>
</protein>